<evidence type="ECO:0000255" key="1">
    <source>
        <dbReference type="HAMAP-Rule" id="MF_01376"/>
    </source>
</evidence>
<organism>
    <name type="scientific">Bacteroides fragilis (strain YCH46)</name>
    <dbReference type="NCBI Taxonomy" id="295405"/>
    <lineage>
        <taxon>Bacteria</taxon>
        <taxon>Pseudomonadati</taxon>
        <taxon>Bacteroidota</taxon>
        <taxon>Bacteroidia</taxon>
        <taxon>Bacteroidales</taxon>
        <taxon>Bacteroidaceae</taxon>
        <taxon>Bacteroides</taxon>
    </lineage>
</organism>
<protein>
    <recommendedName>
        <fullName evidence="1">2-aminoethylphosphonate--pyruvate transaminase</fullName>
        <ecNumber evidence="1">2.6.1.37</ecNumber>
    </recommendedName>
    <alternativeName>
        <fullName evidence="1">2-aminoethylphosphonate aminotransferase</fullName>
    </alternativeName>
    <alternativeName>
        <fullName evidence="1">AEP transaminase</fullName>
        <shortName evidence="1">AEPT</shortName>
    </alternativeName>
</protein>
<reference key="1">
    <citation type="journal article" date="2004" name="Proc. Natl. Acad. Sci. U.S.A.">
        <title>Genomic analysis of Bacteroides fragilis reveals extensive DNA inversions regulating cell surface adaptation.</title>
        <authorList>
            <person name="Kuwahara T."/>
            <person name="Yamashita A."/>
            <person name="Hirakawa H."/>
            <person name="Nakayama H."/>
            <person name="Toh H."/>
            <person name="Okada N."/>
            <person name="Kuhara S."/>
            <person name="Hattori M."/>
            <person name="Hayashi T."/>
            <person name="Ohnishi Y."/>
        </authorList>
    </citation>
    <scope>NUCLEOTIDE SEQUENCE [LARGE SCALE GENOMIC DNA]</scope>
    <source>
        <strain>YCH46</strain>
    </source>
</reference>
<comment type="function">
    <text evidence="1">Involved in phosphonate degradation.</text>
</comment>
<comment type="catalytic activity">
    <reaction evidence="1">
        <text>(2-aminoethyl)phosphonate + pyruvate = phosphonoacetaldehyde + L-alanine</text>
        <dbReference type="Rhea" id="RHEA:17021"/>
        <dbReference type="ChEBI" id="CHEBI:15361"/>
        <dbReference type="ChEBI" id="CHEBI:57418"/>
        <dbReference type="ChEBI" id="CHEBI:57972"/>
        <dbReference type="ChEBI" id="CHEBI:58383"/>
        <dbReference type="EC" id="2.6.1.37"/>
    </reaction>
</comment>
<comment type="cofactor">
    <cofactor evidence="1">
        <name>pyridoxal 5'-phosphate</name>
        <dbReference type="ChEBI" id="CHEBI:597326"/>
    </cofactor>
</comment>
<comment type="subunit">
    <text evidence="1">Homodimer.</text>
</comment>
<comment type="similarity">
    <text evidence="1">Belongs to the class-V pyridoxal-phosphate-dependent aminotransferase family. PhnW subfamily.</text>
</comment>
<sequence>MKPYLLLTPGPLTTSETVKETMMTDWCTWDEDYNLHIVEALRKELVGIATRNTEEYTSVLLQGSGTYCVEAVIGAAIGKNDKLLICSNGAYGDRMGNIAEYYHIDYELLAFDETEQVSVDYVDDYLSNNSDVTHVAFVHCETTTGILNPLKELAHVVKMHGKKLIVDAMSSFGGIPMDVSELGIDFLISSANKCIQGVPGFGFIIARRSELVRCKGVARSLSLDIYDQWETMEKGHGKWRFTSPTHVVRAFKQALTELIEEGGVEARHRRYCENHRVLVEGMRSLGFVTLLDDAIQSPIITSFLYPKTGFDFKAFYTALKSKGFVIYPGKISKADTFRIGNIGDVHPEDFARLVEVVRETEY</sequence>
<keyword id="KW-0032">Aminotransferase</keyword>
<keyword id="KW-0663">Pyridoxal phosphate</keyword>
<keyword id="KW-0670">Pyruvate</keyword>
<keyword id="KW-0808">Transferase</keyword>
<feature type="chain" id="PRO_0000286759" description="2-aminoethylphosphonate--pyruvate transaminase">
    <location>
        <begin position="1"/>
        <end position="362"/>
    </location>
</feature>
<feature type="modified residue" description="N6-(pyridoxal phosphate)lysine" evidence="1">
    <location>
        <position position="193"/>
    </location>
</feature>
<name>PHNW_BACFR</name>
<gene>
    <name evidence="1" type="primary">phnW</name>
    <name type="ordered locus">BF3695</name>
</gene>
<dbReference type="EC" id="2.6.1.37" evidence="1"/>
<dbReference type="EMBL" id="AP006841">
    <property type="protein sequence ID" value="BAD50438.1"/>
    <property type="molecule type" value="Genomic_DNA"/>
</dbReference>
<dbReference type="RefSeq" id="WP_005790568.1">
    <property type="nucleotide sequence ID" value="NC_006347.1"/>
</dbReference>
<dbReference type="RefSeq" id="YP_100972.1">
    <property type="nucleotide sequence ID" value="NC_006347.1"/>
</dbReference>
<dbReference type="SMR" id="Q64PZ3"/>
<dbReference type="STRING" id="295405.BF3695"/>
<dbReference type="KEGG" id="bfr:BF3695"/>
<dbReference type="PATRIC" id="fig|295405.11.peg.3546"/>
<dbReference type="HOGENOM" id="CLU_027686_3_1_10"/>
<dbReference type="OrthoDB" id="389074at2"/>
<dbReference type="Proteomes" id="UP000002197">
    <property type="component" value="Chromosome"/>
</dbReference>
<dbReference type="GO" id="GO:0047304">
    <property type="term" value="F:2-aminoethylphosphonate-pyruvate transaminase activity"/>
    <property type="evidence" value="ECO:0007669"/>
    <property type="project" value="UniProtKB-UniRule"/>
</dbReference>
<dbReference type="GO" id="GO:0019700">
    <property type="term" value="P:organic phosphonate catabolic process"/>
    <property type="evidence" value="ECO:0007669"/>
    <property type="project" value="InterPro"/>
</dbReference>
<dbReference type="Gene3D" id="3.90.1150.10">
    <property type="entry name" value="Aspartate Aminotransferase, domain 1"/>
    <property type="match status" value="1"/>
</dbReference>
<dbReference type="Gene3D" id="3.40.640.10">
    <property type="entry name" value="Type I PLP-dependent aspartate aminotransferase-like (Major domain)"/>
    <property type="match status" value="1"/>
</dbReference>
<dbReference type="HAMAP" id="MF_01376">
    <property type="entry name" value="PhnW_aminotrans_5"/>
    <property type="match status" value="1"/>
</dbReference>
<dbReference type="InterPro" id="IPR000192">
    <property type="entry name" value="Aminotrans_V_dom"/>
</dbReference>
<dbReference type="InterPro" id="IPR012703">
    <property type="entry name" value="NH2EtPonate_pyrv_transaminase"/>
</dbReference>
<dbReference type="InterPro" id="IPR015424">
    <property type="entry name" value="PyrdxlP-dep_Trfase"/>
</dbReference>
<dbReference type="InterPro" id="IPR015421">
    <property type="entry name" value="PyrdxlP-dep_Trfase_major"/>
</dbReference>
<dbReference type="InterPro" id="IPR015422">
    <property type="entry name" value="PyrdxlP-dep_Trfase_small"/>
</dbReference>
<dbReference type="InterPro" id="IPR024169">
    <property type="entry name" value="SP_NH2Trfase/AEP_transaminase"/>
</dbReference>
<dbReference type="NCBIfam" id="TIGR03301">
    <property type="entry name" value="PhnW-AepZ"/>
    <property type="match status" value="1"/>
</dbReference>
<dbReference type="NCBIfam" id="NF010006">
    <property type="entry name" value="PRK13479.1"/>
    <property type="match status" value="1"/>
</dbReference>
<dbReference type="NCBIfam" id="TIGR02326">
    <property type="entry name" value="transamin_PhnW"/>
    <property type="match status" value="1"/>
</dbReference>
<dbReference type="PANTHER" id="PTHR42778">
    <property type="entry name" value="2-AMINOETHYLPHOSPHONATE--PYRUVATE TRANSAMINASE"/>
    <property type="match status" value="1"/>
</dbReference>
<dbReference type="PANTHER" id="PTHR42778:SF1">
    <property type="entry name" value="2-AMINOETHYLPHOSPHONATE--PYRUVATE TRANSAMINASE"/>
    <property type="match status" value="1"/>
</dbReference>
<dbReference type="Pfam" id="PF00266">
    <property type="entry name" value="Aminotran_5"/>
    <property type="match status" value="1"/>
</dbReference>
<dbReference type="PIRSF" id="PIRSF000524">
    <property type="entry name" value="SPT"/>
    <property type="match status" value="1"/>
</dbReference>
<dbReference type="SUPFAM" id="SSF53383">
    <property type="entry name" value="PLP-dependent transferases"/>
    <property type="match status" value="1"/>
</dbReference>
<proteinExistence type="inferred from homology"/>
<accession>Q64PZ3</accession>